<sequence>MNNKILEQLEFNKVKELLLPYLKTEQSQEELLELEPMTEAPKIEKSFNEISDMEQIFVEHHSFGIVSLSSISESLKRLELSTDLNIQELLAIKKVLQSSSDMIHFYSDLDNVSFQSLDRLFENLEQFPNLQGSFQAINDGGFLEHFASPELERIRRQLTNSERRVRQILQDMLKEKAELLSENLIASRSGRSVLPVKNTYRNRISGVVHDISSSGSTVYIEPRAVVTLNEEITQLRADERHEEGRILHAFSDLLRPHVATIRNNAWILGHLDFVRAKYLFMSDNKATIPKISNDSTLALINVRHPLLSNPVANDLHFDHDLTAIVITGPNTGGKTIMLKTLGLAQLMGQSGLPVLADKGSKIAVFNNIFADIGDEQSIEQSLSTFSSHMTHIVSILNEADHNSLVLFDELGAGTDPQEGASLAMAILEHLRLSHIKTMATTHYPELKAYGIETNFVENASMEFDAETLSPTYRFMQGVPGRSNAFEIASRLGLAPFIVKQAKQMTDSDSDVNRIIEQLEAQTLETRRRLDHIKEVEQENLKFNRAVKKLYNEFSHERDKELEKIYQEAQEIVDMALNESDTILKKLNDKSQLKPHEIIDAKAQIKKLAPQVDLSKNKVLNKAKKIKAARAPRIGDDIIVTSYGQRGTLTSQLKDGRWEAQVGIIKMTLTQDEFSLVRVQEEQKVKNKQINVVKKADGSGPRARLDLRGKRYEEAMQELDHFIDQALLNNMGQVDIIHGIGTGVIREGVTKYLRRNKHVKHFAYAPQNAGGSGATIVTLG</sequence>
<gene>
    <name evidence="1" type="primary">mutS2</name>
    <name evidence="1" type="synonym">rqcU</name>
    <name type="ordered locus">SPy_1837</name>
    <name type="ordered locus">M5005_Spy1561</name>
</gene>
<proteinExistence type="inferred from homology"/>
<organism>
    <name type="scientific">Streptococcus pyogenes serotype M1</name>
    <dbReference type="NCBI Taxonomy" id="301447"/>
    <lineage>
        <taxon>Bacteria</taxon>
        <taxon>Bacillati</taxon>
        <taxon>Bacillota</taxon>
        <taxon>Bacilli</taxon>
        <taxon>Lactobacillales</taxon>
        <taxon>Streptococcaceae</taxon>
        <taxon>Streptococcus</taxon>
    </lineage>
</organism>
<comment type="function">
    <text evidence="1">Endonuclease that is involved in the suppression of homologous recombination and thus may have a key role in the control of bacterial genetic diversity.</text>
</comment>
<comment type="function">
    <text evidence="1">Acts as a ribosome collision sensor, splitting the ribosome into its 2 subunits. Detects stalled/collided 70S ribosomes which it binds and splits by an ATP-hydrolysis driven conformational change. Acts upstream of the ribosome quality control system (RQC), a ribosome-associated complex that mediates the extraction of incompletely synthesized nascent chains from stalled ribosomes and their subsequent degradation. Probably generates substrates for RQC.</text>
</comment>
<comment type="subunit">
    <text evidence="1">Homodimer. Binds to stalled ribosomes, contacting rRNA.</text>
</comment>
<comment type="similarity">
    <text evidence="1">Belongs to the DNA mismatch repair MutS family. MutS2 subfamily.</text>
</comment>
<feature type="chain" id="PRO_1000093392" description="Endonuclease MutS2">
    <location>
        <begin position="1"/>
        <end position="779"/>
    </location>
</feature>
<feature type="domain" description="Smr" evidence="1">
    <location>
        <begin position="704"/>
        <end position="779"/>
    </location>
</feature>
<feature type="binding site" evidence="1">
    <location>
        <begin position="328"/>
        <end position="335"/>
    </location>
    <ligand>
        <name>ATP</name>
        <dbReference type="ChEBI" id="CHEBI:30616"/>
    </ligand>
</feature>
<dbReference type="EC" id="3.1.-.-" evidence="1"/>
<dbReference type="EC" id="3.6.4.-" evidence="1"/>
<dbReference type="EMBL" id="AE004092">
    <property type="protein sequence ID" value="AAK34559.1"/>
    <property type="molecule type" value="Genomic_DNA"/>
</dbReference>
<dbReference type="EMBL" id="CP000017">
    <property type="protein sequence ID" value="AAZ52179.1"/>
    <property type="molecule type" value="Genomic_DNA"/>
</dbReference>
<dbReference type="RefSeq" id="NP_269838.1">
    <property type="nucleotide sequence ID" value="NC_002737.2"/>
</dbReference>
<dbReference type="SMR" id="Q99Y73"/>
<dbReference type="PaxDb" id="1314-HKU360_01683"/>
<dbReference type="KEGG" id="spy:SPy_1837"/>
<dbReference type="KEGG" id="spz:M5005_Spy1561"/>
<dbReference type="PATRIC" id="fig|160490.10.peg.1596"/>
<dbReference type="HOGENOM" id="CLU_011252_2_1_9"/>
<dbReference type="OMA" id="IHAIIND"/>
<dbReference type="Proteomes" id="UP000000750">
    <property type="component" value="Chromosome"/>
</dbReference>
<dbReference type="GO" id="GO:0005524">
    <property type="term" value="F:ATP binding"/>
    <property type="evidence" value="ECO:0007669"/>
    <property type="project" value="UniProtKB-UniRule"/>
</dbReference>
<dbReference type="GO" id="GO:0016887">
    <property type="term" value="F:ATP hydrolysis activity"/>
    <property type="evidence" value="ECO:0007669"/>
    <property type="project" value="InterPro"/>
</dbReference>
<dbReference type="GO" id="GO:0140664">
    <property type="term" value="F:ATP-dependent DNA damage sensor activity"/>
    <property type="evidence" value="ECO:0007669"/>
    <property type="project" value="InterPro"/>
</dbReference>
<dbReference type="GO" id="GO:0004519">
    <property type="term" value="F:endonuclease activity"/>
    <property type="evidence" value="ECO:0007669"/>
    <property type="project" value="UniProtKB-UniRule"/>
</dbReference>
<dbReference type="GO" id="GO:0030983">
    <property type="term" value="F:mismatched DNA binding"/>
    <property type="evidence" value="ECO:0007669"/>
    <property type="project" value="InterPro"/>
</dbReference>
<dbReference type="GO" id="GO:0043023">
    <property type="term" value="F:ribosomal large subunit binding"/>
    <property type="evidence" value="ECO:0007669"/>
    <property type="project" value="UniProtKB-UniRule"/>
</dbReference>
<dbReference type="GO" id="GO:0019843">
    <property type="term" value="F:rRNA binding"/>
    <property type="evidence" value="ECO:0007669"/>
    <property type="project" value="UniProtKB-UniRule"/>
</dbReference>
<dbReference type="GO" id="GO:0006298">
    <property type="term" value="P:mismatch repair"/>
    <property type="evidence" value="ECO:0007669"/>
    <property type="project" value="InterPro"/>
</dbReference>
<dbReference type="GO" id="GO:0045910">
    <property type="term" value="P:negative regulation of DNA recombination"/>
    <property type="evidence" value="ECO:0007669"/>
    <property type="project" value="InterPro"/>
</dbReference>
<dbReference type="GO" id="GO:0072344">
    <property type="term" value="P:rescue of stalled ribosome"/>
    <property type="evidence" value="ECO:0007669"/>
    <property type="project" value="UniProtKB-UniRule"/>
</dbReference>
<dbReference type="CDD" id="cd03280">
    <property type="entry name" value="ABC_MutS2"/>
    <property type="match status" value="1"/>
</dbReference>
<dbReference type="FunFam" id="3.40.50.300:FF:000830">
    <property type="entry name" value="Endonuclease MutS2"/>
    <property type="match status" value="1"/>
</dbReference>
<dbReference type="Gene3D" id="3.30.1370.110">
    <property type="match status" value="1"/>
</dbReference>
<dbReference type="Gene3D" id="3.40.50.300">
    <property type="entry name" value="P-loop containing nucleotide triphosphate hydrolases"/>
    <property type="match status" value="1"/>
</dbReference>
<dbReference type="HAMAP" id="MF_00092">
    <property type="entry name" value="MutS2"/>
    <property type="match status" value="1"/>
</dbReference>
<dbReference type="InterPro" id="IPR000432">
    <property type="entry name" value="DNA_mismatch_repair_MutS_C"/>
</dbReference>
<dbReference type="InterPro" id="IPR007696">
    <property type="entry name" value="DNA_mismatch_repair_MutS_core"/>
</dbReference>
<dbReference type="InterPro" id="IPR036187">
    <property type="entry name" value="DNA_mismatch_repair_MutS_sf"/>
</dbReference>
<dbReference type="InterPro" id="IPR046893">
    <property type="entry name" value="MSSS"/>
</dbReference>
<dbReference type="InterPro" id="IPR045076">
    <property type="entry name" value="MutS"/>
</dbReference>
<dbReference type="InterPro" id="IPR005747">
    <property type="entry name" value="MutS2"/>
</dbReference>
<dbReference type="InterPro" id="IPR027417">
    <property type="entry name" value="P-loop_NTPase"/>
</dbReference>
<dbReference type="InterPro" id="IPR002625">
    <property type="entry name" value="Smr_dom"/>
</dbReference>
<dbReference type="InterPro" id="IPR036063">
    <property type="entry name" value="Smr_dom_sf"/>
</dbReference>
<dbReference type="NCBIfam" id="TIGR01069">
    <property type="entry name" value="mutS2"/>
    <property type="match status" value="1"/>
</dbReference>
<dbReference type="PANTHER" id="PTHR48466:SF2">
    <property type="entry name" value="OS10G0509000 PROTEIN"/>
    <property type="match status" value="1"/>
</dbReference>
<dbReference type="PANTHER" id="PTHR48466">
    <property type="entry name" value="OS10G0509000 PROTEIN-RELATED"/>
    <property type="match status" value="1"/>
</dbReference>
<dbReference type="Pfam" id="PF20297">
    <property type="entry name" value="MSSS"/>
    <property type="match status" value="1"/>
</dbReference>
<dbReference type="Pfam" id="PF00488">
    <property type="entry name" value="MutS_V"/>
    <property type="match status" value="1"/>
</dbReference>
<dbReference type="Pfam" id="PF01713">
    <property type="entry name" value="Smr"/>
    <property type="match status" value="1"/>
</dbReference>
<dbReference type="PIRSF" id="PIRSF005814">
    <property type="entry name" value="MutS_YshD"/>
    <property type="match status" value="1"/>
</dbReference>
<dbReference type="SMART" id="SM00534">
    <property type="entry name" value="MUTSac"/>
    <property type="match status" value="1"/>
</dbReference>
<dbReference type="SMART" id="SM00533">
    <property type="entry name" value="MUTSd"/>
    <property type="match status" value="1"/>
</dbReference>
<dbReference type="SMART" id="SM00463">
    <property type="entry name" value="SMR"/>
    <property type="match status" value="1"/>
</dbReference>
<dbReference type="SUPFAM" id="SSF48334">
    <property type="entry name" value="DNA repair protein MutS, domain III"/>
    <property type="match status" value="1"/>
</dbReference>
<dbReference type="SUPFAM" id="SSF52540">
    <property type="entry name" value="P-loop containing nucleoside triphosphate hydrolases"/>
    <property type="match status" value="1"/>
</dbReference>
<dbReference type="SUPFAM" id="SSF160443">
    <property type="entry name" value="SMR domain-like"/>
    <property type="match status" value="1"/>
</dbReference>
<dbReference type="PROSITE" id="PS00486">
    <property type="entry name" value="DNA_MISMATCH_REPAIR_2"/>
    <property type="match status" value="1"/>
</dbReference>
<dbReference type="PROSITE" id="PS50828">
    <property type="entry name" value="SMR"/>
    <property type="match status" value="1"/>
</dbReference>
<accession>Q99Y73</accession>
<accession>Q48WU6</accession>
<evidence type="ECO:0000255" key="1">
    <source>
        <dbReference type="HAMAP-Rule" id="MF_00092"/>
    </source>
</evidence>
<name>MUTS2_STRP1</name>
<keyword id="KW-0067">ATP-binding</keyword>
<keyword id="KW-0238">DNA-binding</keyword>
<keyword id="KW-0255">Endonuclease</keyword>
<keyword id="KW-0378">Hydrolase</keyword>
<keyword id="KW-0540">Nuclease</keyword>
<keyword id="KW-0547">Nucleotide-binding</keyword>
<keyword id="KW-1185">Reference proteome</keyword>
<keyword id="KW-0694">RNA-binding</keyword>
<keyword id="KW-0699">rRNA-binding</keyword>
<reference key="1">
    <citation type="journal article" date="2001" name="Proc. Natl. Acad. Sci. U.S.A.">
        <title>Complete genome sequence of an M1 strain of Streptococcus pyogenes.</title>
        <authorList>
            <person name="Ferretti J.J."/>
            <person name="McShan W.M."/>
            <person name="Ajdic D.J."/>
            <person name="Savic D.J."/>
            <person name="Savic G."/>
            <person name="Lyon K."/>
            <person name="Primeaux C."/>
            <person name="Sezate S."/>
            <person name="Suvorov A.N."/>
            <person name="Kenton S."/>
            <person name="Lai H.S."/>
            <person name="Lin S.P."/>
            <person name="Qian Y."/>
            <person name="Jia H.G."/>
            <person name="Najar F.Z."/>
            <person name="Ren Q."/>
            <person name="Zhu H."/>
            <person name="Song L."/>
            <person name="White J."/>
            <person name="Yuan X."/>
            <person name="Clifton S.W."/>
            <person name="Roe B.A."/>
            <person name="McLaughlin R.E."/>
        </authorList>
    </citation>
    <scope>NUCLEOTIDE SEQUENCE [LARGE SCALE GENOMIC DNA]</scope>
    <source>
        <strain>ATCC 700294 / SF370 / Serotype M1</strain>
    </source>
</reference>
<reference key="2">
    <citation type="journal article" date="2005" name="J. Infect. Dis.">
        <title>Evolutionary origin and emergence of a highly successful clone of serotype M1 group A Streptococcus involved multiple horizontal gene transfer events.</title>
        <authorList>
            <person name="Sumby P."/>
            <person name="Porcella S.F."/>
            <person name="Madrigal A.G."/>
            <person name="Barbian K.D."/>
            <person name="Virtaneva K."/>
            <person name="Ricklefs S.M."/>
            <person name="Sturdevant D.E."/>
            <person name="Graham M.R."/>
            <person name="Vuopio-Varkila J."/>
            <person name="Hoe N.P."/>
            <person name="Musser J.M."/>
        </authorList>
    </citation>
    <scope>NUCLEOTIDE SEQUENCE [LARGE SCALE GENOMIC DNA]</scope>
    <source>
        <strain>ATCC BAA-947 / MGAS5005 / Serotype M1</strain>
    </source>
</reference>
<protein>
    <recommendedName>
        <fullName evidence="1">Endonuclease MutS2</fullName>
        <ecNumber evidence="1">3.1.-.-</ecNumber>
    </recommendedName>
    <alternativeName>
        <fullName evidence="1">Ribosome-associated protein quality control-upstream factor</fullName>
        <shortName evidence="1">RQC-upstream factor</shortName>
        <shortName evidence="1">RqcU</shortName>
        <ecNumber evidence="1">3.6.4.-</ecNumber>
    </alternativeName>
</protein>